<accession>Q1RD20</accession>
<gene>
    <name evidence="1" type="primary">mnmA</name>
    <name type="ordered locus">UTI89_C1262</name>
</gene>
<sequence length="368" mass="40915">MSETAKKVIVGMSGGVDSSVSAWLLQQQGYQVEGLFMKNWEEDDGEEYCTAAADLADAQAVCDKLGIELHTVNFAAEYWDNVFELFLAEYKAGRTPNPDILCNKEIKFKAFLEFAAEDLGADYIATGHYVRRADVDGKSRLLRGLDSNKDQSYFLYTLSHEQIAQSLFPVGELEKPQVRKIAEDLGLVTAKKKDSTGICFIGERKFREFLGRYLPAQPGKIITVDGDEIGEHQGLMYHTLGQRKGLGIGGTKDGTEEPWYVVDKDVENNILIVAQGHEHPRLMSVGLIAQQLHWVDREPFTGTMRCTVKTRYRQTDIPCTVKALDADRIEVIFDEPVAAVTPGQSAVFYNGEVCLGGGIIEQRLPLPV</sequence>
<keyword id="KW-0067">ATP-binding</keyword>
<keyword id="KW-0963">Cytoplasm</keyword>
<keyword id="KW-1015">Disulfide bond</keyword>
<keyword id="KW-0547">Nucleotide-binding</keyword>
<keyword id="KW-0694">RNA-binding</keyword>
<keyword id="KW-0808">Transferase</keyword>
<keyword id="KW-0819">tRNA processing</keyword>
<keyword id="KW-0820">tRNA-binding</keyword>
<proteinExistence type="inferred from homology"/>
<name>MNMA_ECOUT</name>
<dbReference type="EC" id="2.8.1.13" evidence="1"/>
<dbReference type="EMBL" id="CP000243">
    <property type="protein sequence ID" value="ABE06744.1"/>
    <property type="status" value="ALT_INIT"/>
    <property type="molecule type" value="Genomic_DNA"/>
</dbReference>
<dbReference type="RefSeq" id="WP_001298466.1">
    <property type="nucleotide sequence ID" value="NZ_CP064825.1"/>
</dbReference>
<dbReference type="SMR" id="Q1RD20"/>
<dbReference type="KEGG" id="eci:UTI89_C1262"/>
<dbReference type="HOGENOM" id="CLU_035188_1_0_6"/>
<dbReference type="Proteomes" id="UP000001952">
    <property type="component" value="Chromosome"/>
</dbReference>
<dbReference type="GO" id="GO:0005737">
    <property type="term" value="C:cytoplasm"/>
    <property type="evidence" value="ECO:0007669"/>
    <property type="project" value="UniProtKB-SubCell"/>
</dbReference>
<dbReference type="GO" id="GO:0005524">
    <property type="term" value="F:ATP binding"/>
    <property type="evidence" value="ECO:0007669"/>
    <property type="project" value="UniProtKB-KW"/>
</dbReference>
<dbReference type="GO" id="GO:0000049">
    <property type="term" value="F:tRNA binding"/>
    <property type="evidence" value="ECO:0007669"/>
    <property type="project" value="UniProtKB-KW"/>
</dbReference>
<dbReference type="GO" id="GO:0103016">
    <property type="term" value="F:tRNA-uridine 2-sulfurtransferase activity"/>
    <property type="evidence" value="ECO:0007669"/>
    <property type="project" value="UniProtKB-EC"/>
</dbReference>
<dbReference type="GO" id="GO:0002143">
    <property type="term" value="P:tRNA wobble position uridine thiolation"/>
    <property type="evidence" value="ECO:0007669"/>
    <property type="project" value="TreeGrafter"/>
</dbReference>
<dbReference type="CDD" id="cd01998">
    <property type="entry name" value="MnmA_TRMU-like"/>
    <property type="match status" value="1"/>
</dbReference>
<dbReference type="FunFam" id="2.30.30.280:FF:000001">
    <property type="entry name" value="tRNA-specific 2-thiouridylase MnmA"/>
    <property type="match status" value="1"/>
</dbReference>
<dbReference type="FunFam" id="2.40.30.10:FF:000023">
    <property type="entry name" value="tRNA-specific 2-thiouridylase MnmA"/>
    <property type="match status" value="1"/>
</dbReference>
<dbReference type="FunFam" id="3.40.50.620:FF:000004">
    <property type="entry name" value="tRNA-specific 2-thiouridylase MnmA"/>
    <property type="match status" value="1"/>
</dbReference>
<dbReference type="Gene3D" id="2.30.30.280">
    <property type="entry name" value="Adenine nucleotide alpha hydrolases-like domains"/>
    <property type="match status" value="1"/>
</dbReference>
<dbReference type="Gene3D" id="3.40.50.620">
    <property type="entry name" value="HUPs"/>
    <property type="match status" value="1"/>
</dbReference>
<dbReference type="Gene3D" id="2.40.30.10">
    <property type="entry name" value="Translation factors"/>
    <property type="match status" value="1"/>
</dbReference>
<dbReference type="HAMAP" id="MF_00144">
    <property type="entry name" value="tRNA_thiouridyl_MnmA"/>
    <property type="match status" value="1"/>
</dbReference>
<dbReference type="InterPro" id="IPR004506">
    <property type="entry name" value="MnmA-like"/>
</dbReference>
<dbReference type="InterPro" id="IPR046885">
    <property type="entry name" value="MnmA-like_C"/>
</dbReference>
<dbReference type="InterPro" id="IPR046884">
    <property type="entry name" value="MnmA-like_central"/>
</dbReference>
<dbReference type="InterPro" id="IPR023382">
    <property type="entry name" value="MnmA-like_central_sf"/>
</dbReference>
<dbReference type="InterPro" id="IPR014729">
    <property type="entry name" value="Rossmann-like_a/b/a_fold"/>
</dbReference>
<dbReference type="NCBIfam" id="NF001138">
    <property type="entry name" value="PRK00143.1"/>
    <property type="match status" value="1"/>
</dbReference>
<dbReference type="NCBIfam" id="TIGR00420">
    <property type="entry name" value="trmU"/>
    <property type="match status" value="1"/>
</dbReference>
<dbReference type="PANTHER" id="PTHR11933:SF5">
    <property type="entry name" value="MITOCHONDRIAL TRNA-SPECIFIC 2-THIOURIDYLASE 1"/>
    <property type="match status" value="1"/>
</dbReference>
<dbReference type="PANTHER" id="PTHR11933">
    <property type="entry name" value="TRNA 5-METHYLAMINOMETHYL-2-THIOURIDYLATE -METHYLTRANSFERASE"/>
    <property type="match status" value="1"/>
</dbReference>
<dbReference type="Pfam" id="PF03054">
    <property type="entry name" value="tRNA_Me_trans"/>
    <property type="match status" value="1"/>
</dbReference>
<dbReference type="Pfam" id="PF20258">
    <property type="entry name" value="tRNA_Me_trans_C"/>
    <property type="match status" value="1"/>
</dbReference>
<dbReference type="Pfam" id="PF20259">
    <property type="entry name" value="tRNA_Me_trans_M"/>
    <property type="match status" value="1"/>
</dbReference>
<dbReference type="SUPFAM" id="SSF52402">
    <property type="entry name" value="Adenine nucleotide alpha hydrolases-like"/>
    <property type="match status" value="1"/>
</dbReference>
<organism>
    <name type="scientific">Escherichia coli (strain UTI89 / UPEC)</name>
    <dbReference type="NCBI Taxonomy" id="364106"/>
    <lineage>
        <taxon>Bacteria</taxon>
        <taxon>Pseudomonadati</taxon>
        <taxon>Pseudomonadota</taxon>
        <taxon>Gammaproteobacteria</taxon>
        <taxon>Enterobacterales</taxon>
        <taxon>Enterobacteriaceae</taxon>
        <taxon>Escherichia</taxon>
    </lineage>
</organism>
<evidence type="ECO:0000255" key="1">
    <source>
        <dbReference type="HAMAP-Rule" id="MF_00144"/>
    </source>
</evidence>
<evidence type="ECO:0000305" key="2"/>
<comment type="function">
    <text evidence="1">Catalyzes the 2-thiolation of uridine at the wobble position (U34) of tRNA(Lys), tRNA(Glu) and tRNA(Gln), leading to the formation of s(2)U34, the first step of tRNA-mnm(5)s(2)U34 synthesis. Sulfur is provided by IscS, via a sulfur-relay system. Binds ATP and its substrate tRNAs.</text>
</comment>
<comment type="catalytic activity">
    <reaction evidence="1">
        <text>S-sulfanyl-L-cysteinyl-[protein] + uridine(34) in tRNA + AH2 + ATP = 2-thiouridine(34) in tRNA + L-cysteinyl-[protein] + A + AMP + diphosphate + H(+)</text>
        <dbReference type="Rhea" id="RHEA:47032"/>
        <dbReference type="Rhea" id="RHEA-COMP:10131"/>
        <dbReference type="Rhea" id="RHEA-COMP:11726"/>
        <dbReference type="Rhea" id="RHEA-COMP:11727"/>
        <dbReference type="Rhea" id="RHEA-COMP:11728"/>
        <dbReference type="ChEBI" id="CHEBI:13193"/>
        <dbReference type="ChEBI" id="CHEBI:15378"/>
        <dbReference type="ChEBI" id="CHEBI:17499"/>
        <dbReference type="ChEBI" id="CHEBI:29950"/>
        <dbReference type="ChEBI" id="CHEBI:30616"/>
        <dbReference type="ChEBI" id="CHEBI:33019"/>
        <dbReference type="ChEBI" id="CHEBI:61963"/>
        <dbReference type="ChEBI" id="CHEBI:65315"/>
        <dbReference type="ChEBI" id="CHEBI:87170"/>
        <dbReference type="ChEBI" id="CHEBI:456215"/>
        <dbReference type="EC" id="2.8.1.13"/>
    </reaction>
</comment>
<comment type="subunit">
    <text evidence="1">Interacts with TusE.</text>
</comment>
<comment type="subcellular location">
    <subcellularLocation>
        <location evidence="1">Cytoplasm</location>
    </subcellularLocation>
</comment>
<comment type="similarity">
    <text evidence="1">Belongs to the MnmA/TRMU family.</text>
</comment>
<comment type="sequence caution" evidence="2">
    <conflict type="erroneous initiation">
        <sequence resource="EMBL-CDS" id="ABE06744"/>
    </conflict>
</comment>
<reference key="1">
    <citation type="journal article" date="2006" name="Proc. Natl. Acad. Sci. U.S.A.">
        <title>Identification of genes subject to positive selection in uropathogenic strains of Escherichia coli: a comparative genomics approach.</title>
        <authorList>
            <person name="Chen S.L."/>
            <person name="Hung C.-S."/>
            <person name="Xu J."/>
            <person name="Reigstad C.S."/>
            <person name="Magrini V."/>
            <person name="Sabo A."/>
            <person name="Blasiar D."/>
            <person name="Bieri T."/>
            <person name="Meyer R.R."/>
            <person name="Ozersky P."/>
            <person name="Armstrong J.R."/>
            <person name="Fulton R.S."/>
            <person name="Latreille J.P."/>
            <person name="Spieth J."/>
            <person name="Hooton T.M."/>
            <person name="Mardis E.R."/>
            <person name="Hultgren S.J."/>
            <person name="Gordon J.I."/>
        </authorList>
    </citation>
    <scope>NUCLEOTIDE SEQUENCE [LARGE SCALE GENOMIC DNA]</scope>
    <source>
        <strain>UTI89 / UPEC</strain>
    </source>
</reference>
<feature type="chain" id="PRO_0000349629" description="tRNA-specific 2-thiouridylase MnmA">
    <location>
        <begin position="1"/>
        <end position="368"/>
    </location>
</feature>
<feature type="region of interest" description="Interaction with target base in tRNA" evidence="1">
    <location>
        <begin position="97"/>
        <end position="99"/>
    </location>
</feature>
<feature type="region of interest" description="Interaction with tRNA" evidence="1">
    <location>
        <begin position="149"/>
        <end position="151"/>
    </location>
</feature>
<feature type="region of interest" description="Interaction with tRNA" evidence="1">
    <location>
        <begin position="311"/>
        <end position="312"/>
    </location>
</feature>
<feature type="active site" description="Nucleophile" evidence="1">
    <location>
        <position position="102"/>
    </location>
</feature>
<feature type="active site" description="Cysteine persulfide intermediate" evidence="1">
    <location>
        <position position="199"/>
    </location>
</feature>
<feature type="binding site" evidence="1">
    <location>
        <begin position="11"/>
        <end position="18"/>
    </location>
    <ligand>
        <name>ATP</name>
        <dbReference type="ChEBI" id="CHEBI:30616"/>
    </ligand>
</feature>
<feature type="binding site" evidence="1">
    <location>
        <position position="37"/>
    </location>
    <ligand>
        <name>ATP</name>
        <dbReference type="ChEBI" id="CHEBI:30616"/>
    </ligand>
</feature>
<feature type="binding site" evidence="1">
    <location>
        <position position="127"/>
    </location>
    <ligand>
        <name>ATP</name>
        <dbReference type="ChEBI" id="CHEBI:30616"/>
    </ligand>
</feature>
<feature type="site" description="Interaction with tRNA" evidence="1">
    <location>
        <position position="128"/>
    </location>
</feature>
<feature type="site" description="Interaction with tRNA" evidence="1">
    <location>
        <position position="344"/>
    </location>
</feature>
<feature type="disulfide bond" description="Alternate" evidence="1">
    <location>
        <begin position="102"/>
        <end position="199"/>
    </location>
</feature>
<protein>
    <recommendedName>
        <fullName evidence="1">tRNA-specific 2-thiouridylase MnmA</fullName>
        <ecNumber evidence="1">2.8.1.13</ecNumber>
    </recommendedName>
</protein>